<proteinExistence type="inferred from homology"/>
<sequence length="238" mass="25731">MAMGLVGQKIGMTRLISDDGSITPVSVIKIELNRIVQTKTVDTNGYSAIQVTTGVKVNKKGEAKVHRVPAAIKGHYAKTSQEIGLGLWEFRVEADEITDATSVDISLFSAGHYVNVVGRSKGKGFQGGVKRHNFQMQDATHGNSISHRAIGSTGQCQEPGRVFKGKKMAGHMGNEQVTQECLKIVKVDSERNIIFVKGSIPGATKGFVKISLSSKKNKINQEVSKNIQNQATNEVVLN</sequence>
<comment type="function">
    <text evidence="1">One of the primary rRNA binding proteins, it binds directly near the 3'-end of the 23S rRNA, where it nucleates assembly of the 50S subunit.</text>
</comment>
<comment type="subunit">
    <text evidence="1">Part of the 50S ribosomal subunit. Forms a cluster with proteins L14 and L19.</text>
</comment>
<comment type="PTM">
    <text evidence="1">Methylated by PrmB.</text>
</comment>
<comment type="similarity">
    <text evidence="1">Belongs to the universal ribosomal protein uL3 family.</text>
</comment>
<feature type="chain" id="PRO_1000141911" description="Large ribosomal subunit protein uL3">
    <location>
        <begin position="1"/>
        <end position="238"/>
    </location>
</feature>
<feature type="modified residue" description="N5-methylglutamine" evidence="1">
    <location>
        <position position="157"/>
    </location>
</feature>
<dbReference type="EMBL" id="CP000488">
    <property type="protein sequence ID" value="ABL01957.1"/>
    <property type="molecule type" value="Genomic_DNA"/>
</dbReference>
<dbReference type="RefSeq" id="WP_011737583.1">
    <property type="nucleotide sequence ID" value="NC_008610.1"/>
</dbReference>
<dbReference type="SMR" id="A1AVK0"/>
<dbReference type="STRING" id="413404.Rmag_0165"/>
<dbReference type="KEGG" id="rma:Rmag_0165"/>
<dbReference type="eggNOG" id="COG0087">
    <property type="taxonomic scope" value="Bacteria"/>
</dbReference>
<dbReference type="HOGENOM" id="CLU_044142_4_1_6"/>
<dbReference type="OrthoDB" id="9806135at2"/>
<dbReference type="Proteomes" id="UP000002587">
    <property type="component" value="Chromosome"/>
</dbReference>
<dbReference type="GO" id="GO:0022625">
    <property type="term" value="C:cytosolic large ribosomal subunit"/>
    <property type="evidence" value="ECO:0007669"/>
    <property type="project" value="TreeGrafter"/>
</dbReference>
<dbReference type="GO" id="GO:0019843">
    <property type="term" value="F:rRNA binding"/>
    <property type="evidence" value="ECO:0007669"/>
    <property type="project" value="UniProtKB-UniRule"/>
</dbReference>
<dbReference type="GO" id="GO:0003735">
    <property type="term" value="F:structural constituent of ribosome"/>
    <property type="evidence" value="ECO:0007669"/>
    <property type="project" value="InterPro"/>
</dbReference>
<dbReference type="GO" id="GO:0006412">
    <property type="term" value="P:translation"/>
    <property type="evidence" value="ECO:0007669"/>
    <property type="project" value="UniProtKB-UniRule"/>
</dbReference>
<dbReference type="FunFam" id="2.40.30.10:FF:000004">
    <property type="entry name" value="50S ribosomal protein L3"/>
    <property type="match status" value="1"/>
</dbReference>
<dbReference type="Gene3D" id="3.30.160.810">
    <property type="match status" value="1"/>
</dbReference>
<dbReference type="Gene3D" id="2.40.30.10">
    <property type="entry name" value="Translation factors"/>
    <property type="match status" value="1"/>
</dbReference>
<dbReference type="HAMAP" id="MF_01325_B">
    <property type="entry name" value="Ribosomal_uL3_B"/>
    <property type="match status" value="1"/>
</dbReference>
<dbReference type="InterPro" id="IPR000597">
    <property type="entry name" value="Ribosomal_uL3"/>
</dbReference>
<dbReference type="InterPro" id="IPR019927">
    <property type="entry name" value="Ribosomal_uL3_bac/org-type"/>
</dbReference>
<dbReference type="InterPro" id="IPR019926">
    <property type="entry name" value="Ribosomal_uL3_CS"/>
</dbReference>
<dbReference type="InterPro" id="IPR009000">
    <property type="entry name" value="Transl_B-barrel_sf"/>
</dbReference>
<dbReference type="NCBIfam" id="TIGR03625">
    <property type="entry name" value="L3_bact"/>
    <property type="match status" value="1"/>
</dbReference>
<dbReference type="PANTHER" id="PTHR11229">
    <property type="entry name" value="50S RIBOSOMAL PROTEIN L3"/>
    <property type="match status" value="1"/>
</dbReference>
<dbReference type="PANTHER" id="PTHR11229:SF16">
    <property type="entry name" value="LARGE RIBOSOMAL SUBUNIT PROTEIN UL3C"/>
    <property type="match status" value="1"/>
</dbReference>
<dbReference type="Pfam" id="PF00297">
    <property type="entry name" value="Ribosomal_L3"/>
    <property type="match status" value="1"/>
</dbReference>
<dbReference type="SUPFAM" id="SSF50447">
    <property type="entry name" value="Translation proteins"/>
    <property type="match status" value="1"/>
</dbReference>
<dbReference type="PROSITE" id="PS00474">
    <property type="entry name" value="RIBOSOMAL_L3"/>
    <property type="match status" value="1"/>
</dbReference>
<organism>
    <name type="scientific">Ruthia magnifica subsp. Calyptogena magnifica</name>
    <dbReference type="NCBI Taxonomy" id="413404"/>
    <lineage>
        <taxon>Bacteria</taxon>
        <taxon>Pseudomonadati</taxon>
        <taxon>Pseudomonadota</taxon>
        <taxon>Gammaproteobacteria</taxon>
        <taxon>Candidatus Pseudothioglobaceae</taxon>
        <taxon>Candidatus Ruthturnera</taxon>
    </lineage>
</organism>
<protein>
    <recommendedName>
        <fullName evidence="1">Large ribosomal subunit protein uL3</fullName>
    </recommendedName>
    <alternativeName>
        <fullName evidence="2">50S ribosomal protein L3</fullName>
    </alternativeName>
</protein>
<gene>
    <name evidence="1" type="primary">rplC</name>
    <name type="ordered locus">Rmag_0165</name>
</gene>
<evidence type="ECO:0000255" key="1">
    <source>
        <dbReference type="HAMAP-Rule" id="MF_01325"/>
    </source>
</evidence>
<evidence type="ECO:0000305" key="2"/>
<accession>A1AVK0</accession>
<reference key="1">
    <citation type="journal article" date="2007" name="Science">
        <title>The Calyptogena magnifica chemoautotrophic symbiont genome.</title>
        <authorList>
            <person name="Newton I.L.G."/>
            <person name="Woyke T."/>
            <person name="Auchtung T.A."/>
            <person name="Dilly G.F."/>
            <person name="Dutton R.J."/>
            <person name="Fisher M.C."/>
            <person name="Fontanez K.M."/>
            <person name="Lau E."/>
            <person name="Stewart F.J."/>
            <person name="Richardson P.M."/>
            <person name="Barry K.W."/>
            <person name="Saunders E."/>
            <person name="Detter J.C."/>
            <person name="Wu D."/>
            <person name="Eisen J.A."/>
            <person name="Cavanaugh C.M."/>
        </authorList>
    </citation>
    <scope>NUCLEOTIDE SEQUENCE [LARGE SCALE GENOMIC DNA]</scope>
</reference>
<name>RL3_RUTMC</name>
<keyword id="KW-0488">Methylation</keyword>
<keyword id="KW-0687">Ribonucleoprotein</keyword>
<keyword id="KW-0689">Ribosomal protein</keyword>
<keyword id="KW-0694">RNA-binding</keyword>
<keyword id="KW-0699">rRNA-binding</keyword>